<evidence type="ECO:0000250" key="1"/>
<feature type="chain" id="PRO_0000067047" description="26S proteasome non-ATPase regulatory subunit 10">
    <location>
        <begin position="1"/>
        <end position="231"/>
    </location>
</feature>
<feature type="repeat" description="ANK 1">
    <location>
        <begin position="3"/>
        <end position="36"/>
    </location>
</feature>
<feature type="repeat" description="ANK 2">
    <location>
        <begin position="37"/>
        <end position="69"/>
    </location>
</feature>
<feature type="repeat" description="ANK 3">
    <location>
        <begin position="70"/>
        <end position="102"/>
    </location>
</feature>
<feature type="repeat" description="ANK 4">
    <location>
        <begin position="103"/>
        <end position="135"/>
    </location>
</feature>
<feature type="repeat" description="ANK 5">
    <location>
        <begin position="136"/>
        <end position="168"/>
    </location>
</feature>
<feature type="repeat" description="ANK 6">
    <location>
        <begin position="169"/>
        <end position="201"/>
    </location>
</feature>
<feature type="repeat" description="ANK 7">
    <location>
        <begin position="202"/>
        <end position="226"/>
    </location>
</feature>
<keyword id="KW-0040">ANK repeat</keyword>
<keyword id="KW-0053">Apoptosis</keyword>
<keyword id="KW-0143">Chaperone</keyword>
<keyword id="KW-0963">Cytoplasm</keyword>
<keyword id="KW-0539">Nucleus</keyword>
<keyword id="KW-1185">Reference proteome</keyword>
<keyword id="KW-0677">Repeat</keyword>
<gene>
    <name type="primary">Psmd10</name>
</gene>
<proteinExistence type="evidence at transcript level"/>
<organism>
    <name type="scientific">Rattus norvegicus</name>
    <name type="common">Rat</name>
    <dbReference type="NCBI Taxonomy" id="10116"/>
    <lineage>
        <taxon>Eukaryota</taxon>
        <taxon>Metazoa</taxon>
        <taxon>Chordata</taxon>
        <taxon>Craniata</taxon>
        <taxon>Vertebrata</taxon>
        <taxon>Euteleostomi</taxon>
        <taxon>Mammalia</taxon>
        <taxon>Eutheria</taxon>
        <taxon>Euarchontoglires</taxon>
        <taxon>Glires</taxon>
        <taxon>Rodentia</taxon>
        <taxon>Myomorpha</taxon>
        <taxon>Muroidea</taxon>
        <taxon>Muridae</taxon>
        <taxon>Murinae</taxon>
        <taxon>Rattus</taxon>
    </lineage>
</organism>
<protein>
    <recommendedName>
        <fullName>26S proteasome non-ATPase regulatory subunit 10</fullName>
    </recommendedName>
    <alternativeName>
        <fullName>26S proteasome regulatory subunit p28</fullName>
    </alternativeName>
    <alternativeName>
        <fullName>Gankyrin</fullName>
    </alternativeName>
</protein>
<reference key="1">
    <citation type="submission" date="1999-01" db="EMBL/GenBank/DDBJ databases">
        <title>Cloning of rat gankyrin homologue containing ankyrin repeats.</title>
        <authorList>
            <person name="Higashitsuji H."/>
            <person name="Fujita J."/>
        </authorList>
    </citation>
    <scope>NUCLEOTIDE SEQUENCE [MRNA]</scope>
    <source>
        <tissue>Placenta</tissue>
    </source>
</reference>
<dbReference type="EMBL" id="AB022014">
    <property type="protein sequence ID" value="BAA36954.1"/>
    <property type="molecule type" value="mRNA"/>
</dbReference>
<dbReference type="RefSeq" id="NP_446377.1">
    <property type="nucleotide sequence ID" value="NM_053925.1"/>
</dbReference>
<dbReference type="SMR" id="Q9Z2X3"/>
<dbReference type="BioGRID" id="250589">
    <property type="interactions" value="1"/>
</dbReference>
<dbReference type="FunCoup" id="Q9Z2X3">
    <property type="interactions" value="29"/>
</dbReference>
<dbReference type="STRING" id="10116.ENSRNOP00000071060"/>
<dbReference type="PhosphoSitePlus" id="Q9Z2X3"/>
<dbReference type="jPOST" id="Q9Z2X3"/>
<dbReference type="GeneID" id="116722"/>
<dbReference type="KEGG" id="rno:116722"/>
<dbReference type="AGR" id="RGD:620350"/>
<dbReference type="CTD" id="5716"/>
<dbReference type="RGD" id="620350">
    <property type="gene designation" value="Psmd10"/>
</dbReference>
<dbReference type="InParanoid" id="Q9Z2X3"/>
<dbReference type="PhylomeDB" id="Q9Z2X3"/>
<dbReference type="Reactome" id="R-RNO-9907900">
    <property type="pathway name" value="Proteasome assembly"/>
</dbReference>
<dbReference type="PRO" id="PR:Q9Z2X3"/>
<dbReference type="Proteomes" id="UP000002494">
    <property type="component" value="Unplaced"/>
</dbReference>
<dbReference type="GO" id="GO:0005737">
    <property type="term" value="C:cytoplasm"/>
    <property type="evidence" value="ECO:0000266"/>
    <property type="project" value="RGD"/>
</dbReference>
<dbReference type="GO" id="GO:0005856">
    <property type="term" value="C:cytoskeleton"/>
    <property type="evidence" value="ECO:0000318"/>
    <property type="project" value="GO_Central"/>
</dbReference>
<dbReference type="GO" id="GO:0005634">
    <property type="term" value="C:nucleus"/>
    <property type="evidence" value="ECO:0000266"/>
    <property type="project" value="RGD"/>
</dbReference>
<dbReference type="GO" id="GO:0000502">
    <property type="term" value="C:proteasome complex"/>
    <property type="evidence" value="ECO:0000266"/>
    <property type="project" value="RGD"/>
</dbReference>
<dbReference type="GO" id="GO:0008540">
    <property type="term" value="C:proteasome regulatory particle, base subcomplex"/>
    <property type="evidence" value="ECO:0000266"/>
    <property type="project" value="RGD"/>
</dbReference>
<dbReference type="GO" id="GO:0061629">
    <property type="term" value="F:RNA polymerase II-specific DNA-binding transcription factor binding"/>
    <property type="evidence" value="ECO:0000318"/>
    <property type="project" value="GO_Central"/>
</dbReference>
<dbReference type="GO" id="GO:0006915">
    <property type="term" value="P:apoptotic process"/>
    <property type="evidence" value="ECO:0007669"/>
    <property type="project" value="UniProtKB-KW"/>
</dbReference>
<dbReference type="GO" id="GO:0043066">
    <property type="term" value="P:negative regulation of apoptotic process"/>
    <property type="evidence" value="ECO:0000250"/>
    <property type="project" value="UniProtKB"/>
</dbReference>
<dbReference type="GO" id="GO:0043518">
    <property type="term" value="P:negative regulation of DNA damage response, signal transduction by p53 class mediator"/>
    <property type="evidence" value="ECO:0000250"/>
    <property type="project" value="UniProtKB"/>
</dbReference>
<dbReference type="GO" id="GO:0043409">
    <property type="term" value="P:negative regulation of MAPK cascade"/>
    <property type="evidence" value="ECO:0000250"/>
    <property type="project" value="UniProtKB"/>
</dbReference>
<dbReference type="GO" id="GO:0032088">
    <property type="term" value="P:negative regulation of NF-kappaB transcription factor activity"/>
    <property type="evidence" value="ECO:0000250"/>
    <property type="project" value="UniProtKB"/>
</dbReference>
<dbReference type="GO" id="GO:0090201">
    <property type="term" value="P:negative regulation of release of cytochrome c from mitochondria"/>
    <property type="evidence" value="ECO:0000250"/>
    <property type="project" value="UniProtKB"/>
</dbReference>
<dbReference type="GO" id="GO:0000122">
    <property type="term" value="P:negative regulation of transcription by RNA polymerase II"/>
    <property type="evidence" value="ECO:0000250"/>
    <property type="project" value="UniProtKB"/>
</dbReference>
<dbReference type="GO" id="GO:0030307">
    <property type="term" value="P:positive regulation of cell growth"/>
    <property type="evidence" value="ECO:0000250"/>
    <property type="project" value="UniProtKB"/>
</dbReference>
<dbReference type="GO" id="GO:0045737">
    <property type="term" value="P:positive regulation of cyclin-dependent protein serine/threonine kinase activity"/>
    <property type="evidence" value="ECO:0000250"/>
    <property type="project" value="UniProtKB"/>
</dbReference>
<dbReference type="GO" id="GO:0032436">
    <property type="term" value="P:positive regulation of proteasomal ubiquitin-dependent protein catabolic process"/>
    <property type="evidence" value="ECO:0000250"/>
    <property type="project" value="UniProtKB"/>
</dbReference>
<dbReference type="GO" id="GO:0031398">
    <property type="term" value="P:positive regulation of protein ubiquitination"/>
    <property type="evidence" value="ECO:0000250"/>
    <property type="project" value="UniProtKB"/>
</dbReference>
<dbReference type="GO" id="GO:0070682">
    <property type="term" value="P:proteasome regulatory particle assembly"/>
    <property type="evidence" value="ECO:0000250"/>
    <property type="project" value="UniProtKB"/>
</dbReference>
<dbReference type="GO" id="GO:0006357">
    <property type="term" value="P:regulation of transcription by RNA polymerase II"/>
    <property type="evidence" value="ECO:0000318"/>
    <property type="project" value="GO_Central"/>
</dbReference>
<dbReference type="FunFam" id="1.25.40.20:FF:000149">
    <property type="entry name" value="26S proteasome non-ATPase regulatory subunit 10 isoform X1"/>
    <property type="match status" value="1"/>
</dbReference>
<dbReference type="Gene3D" id="1.25.40.20">
    <property type="entry name" value="Ankyrin repeat-containing domain"/>
    <property type="match status" value="1"/>
</dbReference>
<dbReference type="InterPro" id="IPR051637">
    <property type="entry name" value="Ank_repeat_dom-contain_49"/>
</dbReference>
<dbReference type="InterPro" id="IPR002110">
    <property type="entry name" value="Ankyrin_rpt"/>
</dbReference>
<dbReference type="InterPro" id="IPR036770">
    <property type="entry name" value="Ankyrin_rpt-contain_sf"/>
</dbReference>
<dbReference type="PANTHER" id="PTHR24180">
    <property type="entry name" value="CYCLIN-DEPENDENT KINASE INHIBITOR 2C-RELATED"/>
    <property type="match status" value="1"/>
</dbReference>
<dbReference type="PANTHER" id="PTHR24180:SF39">
    <property type="entry name" value="PROTEASOME 26S SUBUNIT, NON-ATPASE 10"/>
    <property type="match status" value="1"/>
</dbReference>
<dbReference type="Pfam" id="PF00023">
    <property type="entry name" value="Ank"/>
    <property type="match status" value="1"/>
</dbReference>
<dbReference type="Pfam" id="PF12796">
    <property type="entry name" value="Ank_2"/>
    <property type="match status" value="2"/>
</dbReference>
<dbReference type="PRINTS" id="PR01415">
    <property type="entry name" value="ANKYRIN"/>
</dbReference>
<dbReference type="SMART" id="SM00248">
    <property type="entry name" value="ANK"/>
    <property type="match status" value="5"/>
</dbReference>
<dbReference type="SUPFAM" id="SSF48403">
    <property type="entry name" value="Ankyrin repeat"/>
    <property type="match status" value="1"/>
</dbReference>
<dbReference type="PROSITE" id="PS50297">
    <property type="entry name" value="ANK_REP_REGION"/>
    <property type="match status" value="1"/>
</dbReference>
<dbReference type="PROSITE" id="PS50088">
    <property type="entry name" value="ANK_REPEAT"/>
    <property type="match status" value="5"/>
</dbReference>
<sequence>MEGCVSNLMVCNLAYNGKLDELKESILADKSLATRTDQDSRTALHWACSAGHTEIVEFLLQLGVPVNEKDDAGWSPLHIAASAGRDEIVKALLIKGAQVNAVNQNGCTALHYAASKNRHEIAVMLLEGGANPDAKNHYDATAMHRAAAKGNLKMVHILLFYKASTNIQDTEGNTPLHLACDEERVEEAKLLVTQGASIYIENKEEKTPLQVAKGGLGLILKRIAESEEASM</sequence>
<comment type="function">
    <text evidence="1">Acts as a chaperone during the assembly of the 26S proteasome, specifically of the PA700/19S regulatory complex (RC). In the initial step of the base subcomplex assembly is part of an intermediate PSMD10:PSMC4:PSMC5:PAAF1 module which probably assembles with a PSMD5:PSMC2:PSMC1:PSMD2 module (By similarity). Independently of the proteasome, regulates EGF-induced AKT activation through inhibition of the RHOA/ROCK/PTEN pathway, leading to prolonged AKT activation. Plays an important role in RAS-induced tumorigenesis (By similarity).</text>
</comment>
<comment type="function">
    <text evidence="1">Acts as an oncoprotein by being involved in negative regulation of tumor suppressors RB1 and p53/TP53. Overexpression is leading to phosphorylation of RB1 and proteasomal degradation of RB1. Regulates CDK4-mediated phosphorylation of RB1 by competing with CDKN2A for binding with CDK4. Facilitates binding of MDM2 to p53/TP53 and the mono- and polyubiquitination of p53/TP53 by MDM2 suggesting a function in targeting the TP53:MDM2 complex to the 26S proteasome. Involved in p53-independent apoptosis. Involved in regulation of NF-kappa-B by retaining it in the cytoplasm. Binds to the NF-kappa-B component RELA and accelerates its XPO1/CRM1-mediated nuclear export (By similarity).</text>
</comment>
<comment type="subunit">
    <text evidence="1">Part of transient complex containing PSMD10, PSMC4, PSMC5 and PAAF1 formed during the assembly of the 26S proteasome. Stays associated throughout the assembly of the PA700/19S RC and is released upon association with the 20S core. Interacts with PSMC4. Interacts with RB1. Interacts with CDK4. Interacts with MDM2. Interacts with RELA. Associates with a CDK4:CCND2 serine/threonine kinase complex (By similarity). Interacts with ARHGDIA and increases the interaction between ARHGDIA and RHOA, hence promotes ARHGDIA inactivation of RHOA and ROCK (By similarity).</text>
</comment>
<comment type="subcellular location">
    <subcellularLocation>
        <location evidence="1">Cytoplasm</location>
    </subcellularLocation>
    <subcellularLocation>
        <location evidence="1">Nucleus</location>
    </subcellularLocation>
</comment>
<accession>Q9Z2X3</accession>
<name>PSD10_RAT</name>